<reference key="1">
    <citation type="journal article" date="1993" name="J. Biol. Chem.">
        <title>Characterization of lamprin, an unusual matrix protein from lamprey cartilage. Implications for evolution, structure, and assembly of elastin and other fibrillar proteins.</title>
        <authorList>
            <person name="Robson P."/>
            <person name="Wright G.M."/>
            <person name="Sitarz E."/>
            <person name="Maiti A."/>
            <person name="Rawat M."/>
            <person name="Youson J.H."/>
            <person name="Keeley F.W."/>
        </authorList>
    </citation>
    <scope>NUCLEOTIDE SEQUENCE [MRNA]</scope>
    <scope>PROTEIN SEQUENCE OF 20-44</scope>
    <source>
        <tissue>Cartilage</tissue>
    </source>
</reference>
<protein>
    <recommendedName>
        <fullName>Lamprin 1.8-10</fullName>
    </recommendedName>
    <alternativeName>
        <fullName>Cartilage matrix protein</fullName>
    </alternativeName>
</protein>
<evidence type="ECO:0000269" key="1">
    <source>
    </source>
</evidence>
<comment type="function">
    <text>Self-aggregating protein that is part of the soluble form of lamprin.</text>
</comment>
<comment type="subunit">
    <text>The polymeric lamprin chains self-aggregate to form fibers and have secondary structures particularly rich in beta-sheets and in beta-turns.</text>
</comment>
<comment type="subcellular location">
    <subcellularLocation>
        <location>Secreted</location>
        <location>Extracellular space</location>
        <location>Extracellular matrix</location>
    </subcellularLocation>
</comment>
<proteinExistence type="evidence at protein level"/>
<dbReference type="EMBL" id="L05926">
    <property type="protein sequence ID" value="AAA49270.1"/>
    <property type="molecule type" value="mRNA"/>
</dbReference>
<dbReference type="PIR" id="B45051">
    <property type="entry name" value="B45051"/>
</dbReference>
<dbReference type="Proteomes" id="UP001318040">
    <property type="component" value="Unplaced"/>
</dbReference>
<dbReference type="GO" id="GO:0031012">
    <property type="term" value="C:extracellular matrix"/>
    <property type="evidence" value="ECO:0007669"/>
    <property type="project" value="InterPro"/>
</dbReference>
<dbReference type="GO" id="GO:0005576">
    <property type="term" value="C:extracellular region"/>
    <property type="evidence" value="ECO:0007669"/>
    <property type="project" value="UniProtKB-KW"/>
</dbReference>
<dbReference type="GO" id="GO:0005198">
    <property type="term" value="F:structural molecule activity"/>
    <property type="evidence" value="ECO:0007669"/>
    <property type="project" value="InterPro"/>
</dbReference>
<dbReference type="InterPro" id="IPR009437">
    <property type="entry name" value="Lamprin"/>
</dbReference>
<dbReference type="Pfam" id="PF06403">
    <property type="entry name" value="Lamprin"/>
    <property type="match status" value="1"/>
</dbReference>
<dbReference type="PIRSF" id="PIRSF002264">
    <property type="entry name" value="Lamprin"/>
    <property type="match status" value="1"/>
</dbReference>
<keyword id="KW-0903">Direct protein sequencing</keyword>
<keyword id="KW-0272">Extracellular matrix</keyword>
<keyword id="KW-0677">Repeat</keyword>
<keyword id="KW-0964">Secreted</keyword>
<keyword id="KW-0732">Signal</keyword>
<sequence length="119" mass="11329">MAATMQALLVIALLHLATATPVVTKHKVSTFSTGFLGHPVGGLGYGGLGYGGLGYGGLGVAGLGYGGLGYPGAALGGAYTHHAALGGLGYPLGIGAGVVAPHVVNSKIAAPLAPVVAAI</sequence>
<feature type="signal peptide" evidence="1">
    <location>
        <begin position="1"/>
        <end position="19"/>
    </location>
</feature>
<feature type="chain" id="PRO_0000021577" description="Lamprin 1.8-10">
    <location>
        <begin position="20"/>
        <end position="119"/>
    </location>
</feature>
<feature type="repeat" description="1">
    <location>
        <begin position="41"/>
        <end position="45"/>
    </location>
</feature>
<feature type="repeat" description="2">
    <location>
        <begin position="46"/>
        <end position="50"/>
    </location>
</feature>
<feature type="repeat" description="3">
    <location>
        <begin position="51"/>
        <end position="55"/>
    </location>
</feature>
<feature type="repeat" description="4">
    <location>
        <begin position="56"/>
        <end position="60"/>
    </location>
</feature>
<feature type="repeat" description="5">
    <location>
        <begin position="61"/>
        <end position="65"/>
    </location>
</feature>
<feature type="repeat" description="6">
    <location>
        <begin position="66"/>
        <end position="70"/>
    </location>
</feature>
<feature type="repeat" description="7">
    <location>
        <begin position="86"/>
        <end position="90"/>
    </location>
</feature>
<feature type="region of interest" description="7 X 5 AA approximate repeats">
    <location>
        <begin position="41"/>
        <end position="90"/>
    </location>
</feature>
<name>LAMR_PETMA</name>
<organism>
    <name type="scientific">Petromyzon marinus</name>
    <name type="common">Sea lamprey</name>
    <dbReference type="NCBI Taxonomy" id="7757"/>
    <lineage>
        <taxon>Eukaryota</taxon>
        <taxon>Metazoa</taxon>
        <taxon>Chordata</taxon>
        <taxon>Craniata</taxon>
        <taxon>Vertebrata</taxon>
        <taxon>Cyclostomata</taxon>
        <taxon>Hyperoartia</taxon>
        <taxon>Petromyzontiformes</taxon>
        <taxon>Petromyzontidae</taxon>
        <taxon>Petromyzon</taxon>
    </lineage>
</organism>
<accession>P33577</accession>